<dbReference type="EC" id="5.2.1.8" evidence="1"/>
<dbReference type="EMBL" id="CP000655">
    <property type="protein sequence ID" value="ABP34149.1"/>
    <property type="molecule type" value="Genomic_DNA"/>
</dbReference>
<dbReference type="RefSeq" id="WP_011902774.1">
    <property type="nucleotide sequence ID" value="NC_009379.1"/>
</dbReference>
<dbReference type="SMR" id="A4SXD5"/>
<dbReference type="GeneID" id="31481300"/>
<dbReference type="KEGG" id="pnu:Pnuc_0933"/>
<dbReference type="eggNOG" id="COG0544">
    <property type="taxonomic scope" value="Bacteria"/>
</dbReference>
<dbReference type="HOGENOM" id="CLU_033058_2_0_4"/>
<dbReference type="Proteomes" id="UP000000231">
    <property type="component" value="Chromosome"/>
</dbReference>
<dbReference type="GO" id="GO:0005737">
    <property type="term" value="C:cytoplasm"/>
    <property type="evidence" value="ECO:0007669"/>
    <property type="project" value="UniProtKB-SubCell"/>
</dbReference>
<dbReference type="GO" id="GO:0003755">
    <property type="term" value="F:peptidyl-prolyl cis-trans isomerase activity"/>
    <property type="evidence" value="ECO:0007669"/>
    <property type="project" value="UniProtKB-UniRule"/>
</dbReference>
<dbReference type="GO" id="GO:0044183">
    <property type="term" value="F:protein folding chaperone"/>
    <property type="evidence" value="ECO:0007669"/>
    <property type="project" value="TreeGrafter"/>
</dbReference>
<dbReference type="GO" id="GO:0043022">
    <property type="term" value="F:ribosome binding"/>
    <property type="evidence" value="ECO:0007669"/>
    <property type="project" value="TreeGrafter"/>
</dbReference>
<dbReference type="GO" id="GO:0051083">
    <property type="term" value="P:'de novo' cotranslational protein folding"/>
    <property type="evidence" value="ECO:0007669"/>
    <property type="project" value="TreeGrafter"/>
</dbReference>
<dbReference type="GO" id="GO:0051301">
    <property type="term" value="P:cell division"/>
    <property type="evidence" value="ECO:0007669"/>
    <property type="project" value="UniProtKB-KW"/>
</dbReference>
<dbReference type="GO" id="GO:0061077">
    <property type="term" value="P:chaperone-mediated protein folding"/>
    <property type="evidence" value="ECO:0007669"/>
    <property type="project" value="TreeGrafter"/>
</dbReference>
<dbReference type="GO" id="GO:0015031">
    <property type="term" value="P:protein transport"/>
    <property type="evidence" value="ECO:0007669"/>
    <property type="project" value="UniProtKB-UniRule"/>
</dbReference>
<dbReference type="GO" id="GO:0043335">
    <property type="term" value="P:protein unfolding"/>
    <property type="evidence" value="ECO:0007669"/>
    <property type="project" value="TreeGrafter"/>
</dbReference>
<dbReference type="FunFam" id="3.10.50.40:FF:000001">
    <property type="entry name" value="Trigger factor"/>
    <property type="match status" value="1"/>
</dbReference>
<dbReference type="Gene3D" id="3.10.50.40">
    <property type="match status" value="1"/>
</dbReference>
<dbReference type="Gene3D" id="3.30.70.1050">
    <property type="entry name" value="Trigger factor ribosome-binding domain"/>
    <property type="match status" value="1"/>
</dbReference>
<dbReference type="Gene3D" id="1.10.3120.10">
    <property type="entry name" value="Trigger factor, C-terminal domain"/>
    <property type="match status" value="1"/>
</dbReference>
<dbReference type="HAMAP" id="MF_00303">
    <property type="entry name" value="Trigger_factor_Tig"/>
    <property type="match status" value="1"/>
</dbReference>
<dbReference type="InterPro" id="IPR046357">
    <property type="entry name" value="PPIase_dom_sf"/>
</dbReference>
<dbReference type="InterPro" id="IPR001179">
    <property type="entry name" value="PPIase_FKBP_dom"/>
</dbReference>
<dbReference type="InterPro" id="IPR005215">
    <property type="entry name" value="Trig_fac"/>
</dbReference>
<dbReference type="InterPro" id="IPR008880">
    <property type="entry name" value="Trigger_fac_C"/>
</dbReference>
<dbReference type="InterPro" id="IPR037041">
    <property type="entry name" value="Trigger_fac_C_sf"/>
</dbReference>
<dbReference type="InterPro" id="IPR008881">
    <property type="entry name" value="Trigger_fac_ribosome-bd_bac"/>
</dbReference>
<dbReference type="InterPro" id="IPR036611">
    <property type="entry name" value="Trigger_fac_ribosome-bd_sf"/>
</dbReference>
<dbReference type="InterPro" id="IPR027304">
    <property type="entry name" value="Trigger_fact/SurA_dom_sf"/>
</dbReference>
<dbReference type="NCBIfam" id="TIGR00115">
    <property type="entry name" value="tig"/>
    <property type="match status" value="1"/>
</dbReference>
<dbReference type="PANTHER" id="PTHR30560">
    <property type="entry name" value="TRIGGER FACTOR CHAPERONE AND PEPTIDYL-PROLYL CIS/TRANS ISOMERASE"/>
    <property type="match status" value="1"/>
</dbReference>
<dbReference type="PANTHER" id="PTHR30560:SF3">
    <property type="entry name" value="TRIGGER FACTOR-LIKE PROTEIN TIG, CHLOROPLASTIC"/>
    <property type="match status" value="1"/>
</dbReference>
<dbReference type="Pfam" id="PF00254">
    <property type="entry name" value="FKBP_C"/>
    <property type="match status" value="1"/>
</dbReference>
<dbReference type="Pfam" id="PF05698">
    <property type="entry name" value="Trigger_C"/>
    <property type="match status" value="1"/>
</dbReference>
<dbReference type="Pfam" id="PF05697">
    <property type="entry name" value="Trigger_N"/>
    <property type="match status" value="1"/>
</dbReference>
<dbReference type="PIRSF" id="PIRSF003095">
    <property type="entry name" value="Trigger_factor"/>
    <property type="match status" value="1"/>
</dbReference>
<dbReference type="SUPFAM" id="SSF54534">
    <property type="entry name" value="FKBP-like"/>
    <property type="match status" value="1"/>
</dbReference>
<dbReference type="SUPFAM" id="SSF109998">
    <property type="entry name" value="Triger factor/SurA peptide-binding domain-like"/>
    <property type="match status" value="1"/>
</dbReference>
<dbReference type="SUPFAM" id="SSF102735">
    <property type="entry name" value="Trigger factor ribosome-binding domain"/>
    <property type="match status" value="1"/>
</dbReference>
<dbReference type="PROSITE" id="PS50059">
    <property type="entry name" value="FKBP_PPIASE"/>
    <property type="match status" value="1"/>
</dbReference>
<sequence length="445" mass="49195">MAVQIENLGSVDRKTTLEFARADLAKLREARLAKVGKTMKVAGFRPGKVPKSMVEKQYGMQVDFELQFDKASDLFYELCQKEGIPLAGQPRLEPKSELEAETIAFDVFFEVLPEVKMGDFSAAEVTKYTTEIGEAEIDRAIDVLRKQQVHYHARGEAGAHGDGGANTAAQNGDQVVIDFVGKLDGVEFAGGKAENFEFVLGEGRMLPEFEAAALGLKVGESKSFPLTFPADYHGKDVAGKTAEFTITVKSVNWAHMPVVDDAFALSLGVAEGGVAKMREEVKENLDREVKRRITSLLKSEVMDKLNALCELDVPKSLVTSEQERLVQSARQDLMQRGVPNAKDAPIPAEIFAEQATKRVRLGLILGELVKKQNLAATTDQIKAEIEEQAATYEDPKEVVRWYYSNPSRLKDIENLVLEDNVIKHFTSLAKVVDKAITFEELSKLN</sequence>
<reference key="1">
    <citation type="journal article" date="2012" name="Stand. Genomic Sci.">
        <title>Complete genome sequence of Polynucleobacter necessarius subsp. asymbioticus type strain (QLW-P1DMWA-1(T)).</title>
        <authorList>
            <person name="Meincke L."/>
            <person name="Copeland A."/>
            <person name="Lapidus A."/>
            <person name="Lucas S."/>
            <person name="Berry K.W."/>
            <person name="Del Rio T.G."/>
            <person name="Hammon N."/>
            <person name="Dalin E."/>
            <person name="Tice H."/>
            <person name="Pitluck S."/>
            <person name="Richardson P."/>
            <person name="Bruce D."/>
            <person name="Goodwin L."/>
            <person name="Han C."/>
            <person name="Tapia R."/>
            <person name="Detter J.C."/>
            <person name="Schmutz J."/>
            <person name="Brettin T."/>
            <person name="Larimer F."/>
            <person name="Land M."/>
            <person name="Hauser L."/>
            <person name="Kyrpides N.C."/>
            <person name="Ivanova N."/>
            <person name="Goker M."/>
            <person name="Woyke T."/>
            <person name="Wu Q.L."/>
            <person name="Pockl M."/>
            <person name="Hahn M.W."/>
            <person name="Klenk H.P."/>
        </authorList>
    </citation>
    <scope>NUCLEOTIDE SEQUENCE [LARGE SCALE GENOMIC DNA]</scope>
    <source>
        <strain>DSM 18221 / CIP 109841 / QLW-P1DMWA-1</strain>
    </source>
</reference>
<protein>
    <recommendedName>
        <fullName evidence="1">Trigger factor</fullName>
        <shortName evidence="1">TF</shortName>
        <ecNumber evidence="1">5.2.1.8</ecNumber>
    </recommendedName>
    <alternativeName>
        <fullName evidence="1">PPIase</fullName>
    </alternativeName>
</protein>
<name>TIG_POLAQ</name>
<feature type="chain" id="PRO_1000079049" description="Trigger factor">
    <location>
        <begin position="1"/>
        <end position="445"/>
    </location>
</feature>
<feature type="domain" description="PPIase FKBP-type" evidence="1">
    <location>
        <begin position="172"/>
        <end position="257"/>
    </location>
</feature>
<keyword id="KW-0131">Cell cycle</keyword>
<keyword id="KW-0132">Cell division</keyword>
<keyword id="KW-0143">Chaperone</keyword>
<keyword id="KW-0963">Cytoplasm</keyword>
<keyword id="KW-0413">Isomerase</keyword>
<keyword id="KW-1185">Reference proteome</keyword>
<keyword id="KW-0697">Rotamase</keyword>
<organism>
    <name type="scientific">Polynucleobacter asymbioticus (strain DSM 18221 / CIP 109841 / QLW-P1DMWA-1)</name>
    <name type="common">Polynucleobacter necessarius subsp. asymbioticus</name>
    <dbReference type="NCBI Taxonomy" id="312153"/>
    <lineage>
        <taxon>Bacteria</taxon>
        <taxon>Pseudomonadati</taxon>
        <taxon>Pseudomonadota</taxon>
        <taxon>Betaproteobacteria</taxon>
        <taxon>Burkholderiales</taxon>
        <taxon>Burkholderiaceae</taxon>
        <taxon>Polynucleobacter</taxon>
    </lineage>
</organism>
<gene>
    <name evidence="1" type="primary">tig</name>
    <name type="ordered locus">Pnuc_0933</name>
</gene>
<proteinExistence type="inferred from homology"/>
<accession>A4SXD5</accession>
<evidence type="ECO:0000255" key="1">
    <source>
        <dbReference type="HAMAP-Rule" id="MF_00303"/>
    </source>
</evidence>
<comment type="function">
    <text evidence="1">Involved in protein export. Acts as a chaperone by maintaining the newly synthesized protein in an open conformation. Functions as a peptidyl-prolyl cis-trans isomerase.</text>
</comment>
<comment type="catalytic activity">
    <reaction evidence="1">
        <text>[protein]-peptidylproline (omega=180) = [protein]-peptidylproline (omega=0)</text>
        <dbReference type="Rhea" id="RHEA:16237"/>
        <dbReference type="Rhea" id="RHEA-COMP:10747"/>
        <dbReference type="Rhea" id="RHEA-COMP:10748"/>
        <dbReference type="ChEBI" id="CHEBI:83833"/>
        <dbReference type="ChEBI" id="CHEBI:83834"/>
        <dbReference type="EC" id="5.2.1.8"/>
    </reaction>
</comment>
<comment type="subcellular location">
    <subcellularLocation>
        <location>Cytoplasm</location>
    </subcellularLocation>
    <text evidence="1">About half TF is bound to the ribosome near the polypeptide exit tunnel while the other half is free in the cytoplasm.</text>
</comment>
<comment type="domain">
    <text evidence="1">Consists of 3 domains; the N-terminus binds the ribosome, the middle domain has PPIase activity, while the C-terminus has intrinsic chaperone activity on its own.</text>
</comment>
<comment type="similarity">
    <text evidence="1">Belongs to the FKBP-type PPIase family. Tig subfamily.</text>
</comment>